<organism>
    <name type="scientific">Escherichia coli (strain 55989 / EAEC)</name>
    <dbReference type="NCBI Taxonomy" id="585055"/>
    <lineage>
        <taxon>Bacteria</taxon>
        <taxon>Pseudomonadati</taxon>
        <taxon>Pseudomonadota</taxon>
        <taxon>Gammaproteobacteria</taxon>
        <taxon>Enterobacterales</taxon>
        <taxon>Enterobacteriaceae</taxon>
        <taxon>Escherichia</taxon>
    </lineage>
</organism>
<sequence>MQLEKMITEGSNTASAEIDRVSTLEMCRIINDEDKTVPLAVERVLPDIAAAIDVIHAQVSGGGRLIYLGAGTSGRLGILDASECPPTYGVKPGLVVGLIAGGEYAIQHAVEGAEDSREGGVNDLKNINLTAQDVVVGIAASGRTPYVIAGLEYARQLGCRTVGISCNPGSAVSTTAEFAITPIVGAEVVTGSSRMKAGTAQKLVLNMLSTGLMIKSGKVFGNLMVDVVATNEKLHVRQVNIVKNATGCNAEQAEAALIACERNCKTAIVMVLKNLDAAEAKKRLDQHGGFIRQVLDKE</sequence>
<proteinExistence type="inferred from homology"/>
<keyword id="KW-0119">Carbohydrate metabolism</keyword>
<keyword id="KW-0456">Lyase</keyword>
<keyword id="KW-1185">Reference proteome</keyword>
<dbReference type="EC" id="4.2.1.126" evidence="1"/>
<dbReference type="EMBL" id="CU928145">
    <property type="protein sequence ID" value="CAU98583.1"/>
    <property type="molecule type" value="Genomic_DNA"/>
</dbReference>
<dbReference type="RefSeq" id="WP_001175648.1">
    <property type="nucleotide sequence ID" value="NC_011748.1"/>
</dbReference>
<dbReference type="SMR" id="B7LCH2"/>
<dbReference type="KEGG" id="eck:EC55989_2717"/>
<dbReference type="HOGENOM" id="CLU_049049_1_1_6"/>
<dbReference type="UniPathway" id="UPA00342"/>
<dbReference type="UniPathway" id="UPA00343"/>
<dbReference type="UniPathway" id="UPA00544"/>
<dbReference type="Proteomes" id="UP000000746">
    <property type="component" value="Chromosome"/>
</dbReference>
<dbReference type="GO" id="GO:0097367">
    <property type="term" value="F:carbohydrate derivative binding"/>
    <property type="evidence" value="ECO:0007669"/>
    <property type="project" value="InterPro"/>
</dbReference>
<dbReference type="GO" id="GO:0016835">
    <property type="term" value="F:carbon-oxygen lyase activity"/>
    <property type="evidence" value="ECO:0007669"/>
    <property type="project" value="UniProtKB-UniRule"/>
</dbReference>
<dbReference type="GO" id="GO:0016803">
    <property type="term" value="F:ether hydrolase activity"/>
    <property type="evidence" value="ECO:0007669"/>
    <property type="project" value="TreeGrafter"/>
</dbReference>
<dbReference type="GO" id="GO:0097175">
    <property type="term" value="P:1,6-anhydro-N-acetyl-beta-muramic acid catabolic process"/>
    <property type="evidence" value="ECO:0007669"/>
    <property type="project" value="UniProtKB-UniRule"/>
</dbReference>
<dbReference type="GO" id="GO:0046348">
    <property type="term" value="P:amino sugar catabolic process"/>
    <property type="evidence" value="ECO:0007669"/>
    <property type="project" value="InterPro"/>
</dbReference>
<dbReference type="GO" id="GO:0097173">
    <property type="term" value="P:N-acetylmuramic acid catabolic process"/>
    <property type="evidence" value="ECO:0007669"/>
    <property type="project" value="UniProtKB-UniPathway"/>
</dbReference>
<dbReference type="GO" id="GO:0009254">
    <property type="term" value="P:peptidoglycan turnover"/>
    <property type="evidence" value="ECO:0007669"/>
    <property type="project" value="UniProtKB-UniRule"/>
</dbReference>
<dbReference type="CDD" id="cd05007">
    <property type="entry name" value="SIS_Etherase"/>
    <property type="match status" value="1"/>
</dbReference>
<dbReference type="FunFam" id="1.10.8.1080:FF:000001">
    <property type="entry name" value="N-acetylmuramic acid 6-phosphate etherase"/>
    <property type="match status" value="1"/>
</dbReference>
<dbReference type="FunFam" id="3.40.50.10490:FF:000014">
    <property type="entry name" value="N-acetylmuramic acid 6-phosphate etherase"/>
    <property type="match status" value="1"/>
</dbReference>
<dbReference type="Gene3D" id="1.10.8.1080">
    <property type="match status" value="1"/>
</dbReference>
<dbReference type="Gene3D" id="3.40.50.10490">
    <property type="entry name" value="Glucose-6-phosphate isomerase like protein, domain 1"/>
    <property type="match status" value="1"/>
</dbReference>
<dbReference type="HAMAP" id="MF_00068">
    <property type="entry name" value="MurQ"/>
    <property type="match status" value="1"/>
</dbReference>
<dbReference type="InterPro" id="IPR005488">
    <property type="entry name" value="Etherase_MurQ"/>
</dbReference>
<dbReference type="InterPro" id="IPR005486">
    <property type="entry name" value="Glucokinase_regulatory_CS"/>
</dbReference>
<dbReference type="InterPro" id="IPR040190">
    <property type="entry name" value="MURQ/GCKR"/>
</dbReference>
<dbReference type="InterPro" id="IPR001347">
    <property type="entry name" value="SIS_dom"/>
</dbReference>
<dbReference type="InterPro" id="IPR046348">
    <property type="entry name" value="SIS_dom_sf"/>
</dbReference>
<dbReference type="NCBIfam" id="TIGR00274">
    <property type="entry name" value="N-acetylmuramic acid 6-phosphate etherase"/>
    <property type="match status" value="1"/>
</dbReference>
<dbReference type="NCBIfam" id="NF003915">
    <property type="entry name" value="PRK05441.1"/>
    <property type="match status" value="1"/>
</dbReference>
<dbReference type="NCBIfam" id="NF009222">
    <property type="entry name" value="PRK12570.1"/>
    <property type="match status" value="1"/>
</dbReference>
<dbReference type="PANTHER" id="PTHR10088">
    <property type="entry name" value="GLUCOKINASE REGULATORY PROTEIN"/>
    <property type="match status" value="1"/>
</dbReference>
<dbReference type="PANTHER" id="PTHR10088:SF4">
    <property type="entry name" value="GLUCOKINASE REGULATORY PROTEIN"/>
    <property type="match status" value="1"/>
</dbReference>
<dbReference type="Pfam" id="PF22645">
    <property type="entry name" value="GKRP_SIS_N"/>
    <property type="match status" value="1"/>
</dbReference>
<dbReference type="SUPFAM" id="SSF53697">
    <property type="entry name" value="SIS domain"/>
    <property type="match status" value="1"/>
</dbReference>
<dbReference type="PROSITE" id="PS01272">
    <property type="entry name" value="GCKR"/>
    <property type="match status" value="1"/>
</dbReference>
<dbReference type="PROSITE" id="PS51464">
    <property type="entry name" value="SIS"/>
    <property type="match status" value="1"/>
</dbReference>
<protein>
    <recommendedName>
        <fullName evidence="1">N-acetylmuramic acid 6-phosphate etherase</fullName>
        <shortName evidence="1">MurNAc-6-P etherase</shortName>
        <ecNumber evidence="1">4.2.1.126</ecNumber>
    </recommendedName>
    <alternativeName>
        <fullName evidence="1">N-acetylmuramic acid 6-phosphate hydrolase</fullName>
    </alternativeName>
    <alternativeName>
        <fullName evidence="1">N-acetylmuramic acid 6-phosphate lyase</fullName>
    </alternativeName>
</protein>
<accession>B7LCH2</accession>
<evidence type="ECO:0000255" key="1">
    <source>
        <dbReference type="HAMAP-Rule" id="MF_00068"/>
    </source>
</evidence>
<gene>
    <name evidence="1" type="primary">murQ</name>
    <name type="ordered locus">EC55989_2717</name>
</gene>
<feature type="chain" id="PRO_1000118011" description="N-acetylmuramic acid 6-phosphate etherase">
    <location>
        <begin position="1"/>
        <end position="298"/>
    </location>
</feature>
<feature type="domain" description="SIS" evidence="1">
    <location>
        <begin position="55"/>
        <end position="218"/>
    </location>
</feature>
<feature type="active site" description="Proton donor" evidence="1">
    <location>
        <position position="83"/>
    </location>
</feature>
<feature type="active site" evidence="1">
    <location>
        <position position="114"/>
    </location>
</feature>
<name>MURQ_ECO55</name>
<reference key="1">
    <citation type="journal article" date="2009" name="PLoS Genet.">
        <title>Organised genome dynamics in the Escherichia coli species results in highly diverse adaptive paths.</title>
        <authorList>
            <person name="Touchon M."/>
            <person name="Hoede C."/>
            <person name="Tenaillon O."/>
            <person name="Barbe V."/>
            <person name="Baeriswyl S."/>
            <person name="Bidet P."/>
            <person name="Bingen E."/>
            <person name="Bonacorsi S."/>
            <person name="Bouchier C."/>
            <person name="Bouvet O."/>
            <person name="Calteau A."/>
            <person name="Chiapello H."/>
            <person name="Clermont O."/>
            <person name="Cruveiller S."/>
            <person name="Danchin A."/>
            <person name="Diard M."/>
            <person name="Dossat C."/>
            <person name="Karoui M.E."/>
            <person name="Frapy E."/>
            <person name="Garry L."/>
            <person name="Ghigo J.M."/>
            <person name="Gilles A.M."/>
            <person name="Johnson J."/>
            <person name="Le Bouguenec C."/>
            <person name="Lescat M."/>
            <person name="Mangenot S."/>
            <person name="Martinez-Jehanne V."/>
            <person name="Matic I."/>
            <person name="Nassif X."/>
            <person name="Oztas S."/>
            <person name="Petit M.A."/>
            <person name="Pichon C."/>
            <person name="Rouy Z."/>
            <person name="Ruf C.S."/>
            <person name="Schneider D."/>
            <person name="Tourret J."/>
            <person name="Vacherie B."/>
            <person name="Vallenet D."/>
            <person name="Medigue C."/>
            <person name="Rocha E.P.C."/>
            <person name="Denamur E."/>
        </authorList>
    </citation>
    <scope>NUCLEOTIDE SEQUENCE [LARGE SCALE GENOMIC DNA]</scope>
    <source>
        <strain>55989 / EAEC</strain>
    </source>
</reference>
<comment type="function">
    <text evidence="1">Specifically catalyzes the cleavage of the D-lactyl ether substituent of MurNAc 6-phosphate, producing GlcNAc 6-phosphate and D-lactate. Together with AnmK, is also required for the utilization of anhydro-N-acetylmuramic acid (anhMurNAc) either imported from the medium or derived from its own cell wall murein, and thus plays a role in cell wall recycling.</text>
</comment>
<comment type="catalytic activity">
    <reaction evidence="1">
        <text>N-acetyl-D-muramate 6-phosphate + H2O = N-acetyl-D-glucosamine 6-phosphate + (R)-lactate</text>
        <dbReference type="Rhea" id="RHEA:26410"/>
        <dbReference type="ChEBI" id="CHEBI:15377"/>
        <dbReference type="ChEBI" id="CHEBI:16004"/>
        <dbReference type="ChEBI" id="CHEBI:57513"/>
        <dbReference type="ChEBI" id="CHEBI:58722"/>
        <dbReference type="EC" id="4.2.1.126"/>
    </reaction>
</comment>
<comment type="pathway">
    <text evidence="1">Amino-sugar metabolism; 1,6-anhydro-N-acetylmuramate degradation.</text>
</comment>
<comment type="pathway">
    <text evidence="1">Amino-sugar metabolism; N-acetylmuramate degradation.</text>
</comment>
<comment type="pathway">
    <text evidence="1">Cell wall biogenesis; peptidoglycan recycling.</text>
</comment>
<comment type="subunit">
    <text evidence="1">Homodimer.</text>
</comment>
<comment type="induction">
    <text evidence="1">Induced by MurNAc 6-phosphate that releases the repressor MurR from the DNA. Repressed by MurR in the absence of MurNAc 6-phosphate.</text>
</comment>
<comment type="miscellaneous">
    <text evidence="1">A lyase-type mechanism (elimination/hydration) is suggested for the cleavage of the lactyl ether bond of MurNAc 6-phosphate, with the formation of an alpha,beta-unsaturated aldehyde intermediate with (E)-stereochemistry, followed by the syn addition of water to give product.</text>
</comment>
<comment type="similarity">
    <text evidence="1">Belongs to the GCKR-like family. MurNAc-6-P etherase subfamily.</text>
</comment>